<reference key="1">
    <citation type="journal article" date="1995" name="J. Bacteriol.">
        <title>Pediococcus acidilactici ldhD gene: cloning, nucleotide sequence, and transcriptional analysis.</title>
        <authorList>
            <person name="Garmyn D."/>
            <person name="Ferain T."/>
            <person name="Bernard N."/>
            <person name="Hols P."/>
            <person name="Delplace B."/>
            <person name="Delcour J."/>
        </authorList>
    </citation>
    <scope>NUCLEOTIDE SEQUENCE [GENOMIC DNA]</scope>
    <scope>FUNCTION</scope>
    <scope>CATALYTIC ACTIVITY</scope>
    <source>
        <strain>DG302</strain>
    </source>
</reference>
<proteinExistence type="evidence at protein level"/>
<feature type="chain" id="PRO_0000075958" description="D-lactate/D-glycerate dehydrogenase">
    <location>
        <begin position="1"/>
        <end position="331"/>
    </location>
</feature>
<feature type="active site" evidence="1">
    <location>
        <position position="234"/>
    </location>
</feature>
<feature type="active site" evidence="1">
    <location>
        <position position="263"/>
    </location>
</feature>
<feature type="active site" description="Proton donor" evidence="1">
    <location>
        <position position="295"/>
    </location>
</feature>
<feature type="binding site" evidence="2">
    <location>
        <begin position="154"/>
        <end position="155"/>
    </location>
    <ligand>
        <name>NAD(+)</name>
        <dbReference type="ChEBI" id="CHEBI:57540"/>
    </ligand>
</feature>
<feature type="binding site" evidence="1">
    <location>
        <position position="174"/>
    </location>
    <ligand>
        <name>NAD(+)</name>
        <dbReference type="ChEBI" id="CHEBI:57540"/>
    </ligand>
</feature>
<feature type="binding site" evidence="2">
    <location>
        <begin position="205"/>
        <end position="206"/>
    </location>
    <ligand>
        <name>NAD(+)</name>
        <dbReference type="ChEBI" id="CHEBI:57540"/>
    </ligand>
</feature>
<feature type="binding site" evidence="2">
    <location>
        <position position="211"/>
    </location>
    <ligand>
        <name>NAD(+)</name>
        <dbReference type="ChEBI" id="CHEBI:57540"/>
    </ligand>
</feature>
<feature type="binding site" evidence="2">
    <location>
        <begin position="232"/>
        <end position="234"/>
    </location>
    <ligand>
        <name>NAD(+)</name>
        <dbReference type="ChEBI" id="CHEBI:57540"/>
    </ligand>
</feature>
<feature type="binding site" evidence="2">
    <location>
        <position position="258"/>
    </location>
    <ligand>
        <name>NAD(+)</name>
        <dbReference type="ChEBI" id="CHEBI:57540"/>
    </ligand>
</feature>
<comment type="function">
    <text evidence="3">Has both D-lactate and D-glycerate dehydrogenase activities. Equally active on pyruvate and hydroxypyruvate.</text>
</comment>
<comment type="catalytic activity">
    <reaction evidence="3">
        <text>(R)-lactate + NAD(+) = pyruvate + NADH + H(+)</text>
        <dbReference type="Rhea" id="RHEA:16369"/>
        <dbReference type="ChEBI" id="CHEBI:15361"/>
        <dbReference type="ChEBI" id="CHEBI:15378"/>
        <dbReference type="ChEBI" id="CHEBI:16004"/>
        <dbReference type="ChEBI" id="CHEBI:57540"/>
        <dbReference type="ChEBI" id="CHEBI:57945"/>
        <dbReference type="EC" id="1.1.1.28"/>
    </reaction>
</comment>
<comment type="catalytic activity">
    <reaction evidence="3">
        <text>(R)-glycerate + NAD(+) = 3-hydroxypyruvate + NADH + H(+)</text>
        <dbReference type="Rhea" id="RHEA:17905"/>
        <dbReference type="ChEBI" id="CHEBI:15378"/>
        <dbReference type="ChEBI" id="CHEBI:16659"/>
        <dbReference type="ChEBI" id="CHEBI:17180"/>
        <dbReference type="ChEBI" id="CHEBI:57540"/>
        <dbReference type="ChEBI" id="CHEBI:57945"/>
        <dbReference type="EC" id="1.1.1.29"/>
    </reaction>
</comment>
<comment type="subunit">
    <text evidence="1">Homodimer.</text>
</comment>
<comment type="similarity">
    <text evidence="5">Belongs to the D-isomer specific 2-hydroxyacid dehydrogenase family.</text>
</comment>
<gene>
    <name evidence="4" type="primary">ldhD</name>
</gene>
<sequence>MKIIAYGIRDDEKPYLDEWVTKNHIEVKAVPDLLDSSNIDLAKDYDGVVAYQQKPYTADLFDKMHEFGIHAFSLRNVGLDNVPADALKKNDIKISNVPAYSPRAIAELSVTQLLALLRKIPEFEYKMAHGDYRWEPDIGLELNQMTVGVIGTGRIGRAAIDIFKPFGAKVIAYDVFRNPALEKEGMYVDTLEELYQQANVITLHVPALKDNYHMLDEKAFGQMQDGTFILNFARGTLVDTPALLKALDSGKVAGAALDTYENEVGIFDVDHGDQPIDDPVFNDLMSRRNVMITPHAAFYTRPAVKNMVQIALDNNRDLIEKNSSKNEVKFE</sequence>
<dbReference type="EC" id="1.1.1.28" evidence="3"/>
<dbReference type="EC" id="1.1.1.29" evidence="3"/>
<dbReference type="EMBL" id="X70925">
    <property type="protein sequence ID" value="CAA50275.1"/>
    <property type="molecule type" value="Genomic_DNA"/>
</dbReference>
<dbReference type="SMR" id="Q59642"/>
<dbReference type="STRING" id="1254.A4V11_01320"/>
<dbReference type="GO" id="GO:0008720">
    <property type="term" value="F:D-lactate dehydrogenase activity"/>
    <property type="evidence" value="ECO:0007669"/>
    <property type="project" value="UniProtKB-EC"/>
</dbReference>
<dbReference type="GO" id="GO:0008465">
    <property type="term" value="F:hydroxypyruvate reductase (NADH) activity"/>
    <property type="evidence" value="ECO:0007669"/>
    <property type="project" value="UniProtKB-EC"/>
</dbReference>
<dbReference type="GO" id="GO:0051287">
    <property type="term" value="F:NAD binding"/>
    <property type="evidence" value="ECO:0007669"/>
    <property type="project" value="InterPro"/>
</dbReference>
<dbReference type="CDD" id="cd12186">
    <property type="entry name" value="LDH"/>
    <property type="match status" value="1"/>
</dbReference>
<dbReference type="FunFam" id="3.40.50.720:FF:000041">
    <property type="entry name" value="D-3-phosphoglycerate dehydrogenase"/>
    <property type="match status" value="1"/>
</dbReference>
<dbReference type="Gene3D" id="3.40.50.720">
    <property type="entry name" value="NAD(P)-binding Rossmann-like Domain"/>
    <property type="match status" value="2"/>
</dbReference>
<dbReference type="InterPro" id="IPR006139">
    <property type="entry name" value="D-isomer_2_OHA_DH_cat_dom"/>
</dbReference>
<dbReference type="InterPro" id="IPR029753">
    <property type="entry name" value="D-isomer_DH_CS"/>
</dbReference>
<dbReference type="InterPro" id="IPR029752">
    <property type="entry name" value="D-isomer_DH_CS1"/>
</dbReference>
<dbReference type="InterPro" id="IPR006140">
    <property type="entry name" value="D-isomer_DH_NAD-bd"/>
</dbReference>
<dbReference type="InterPro" id="IPR036291">
    <property type="entry name" value="NAD(P)-bd_dom_sf"/>
</dbReference>
<dbReference type="PANTHER" id="PTHR43026">
    <property type="entry name" value="2-HYDROXYACID DEHYDROGENASE HOMOLOG 1-RELATED"/>
    <property type="match status" value="1"/>
</dbReference>
<dbReference type="PANTHER" id="PTHR43026:SF1">
    <property type="entry name" value="2-HYDROXYACID DEHYDROGENASE HOMOLOG 1-RELATED"/>
    <property type="match status" value="1"/>
</dbReference>
<dbReference type="Pfam" id="PF00389">
    <property type="entry name" value="2-Hacid_dh"/>
    <property type="match status" value="1"/>
</dbReference>
<dbReference type="Pfam" id="PF02826">
    <property type="entry name" value="2-Hacid_dh_C"/>
    <property type="match status" value="1"/>
</dbReference>
<dbReference type="SUPFAM" id="SSF52283">
    <property type="entry name" value="Formate/glycerate dehydrogenase catalytic domain-like"/>
    <property type="match status" value="1"/>
</dbReference>
<dbReference type="SUPFAM" id="SSF51735">
    <property type="entry name" value="NAD(P)-binding Rossmann-fold domains"/>
    <property type="match status" value="1"/>
</dbReference>
<dbReference type="PROSITE" id="PS00065">
    <property type="entry name" value="D_2_HYDROXYACID_DH_1"/>
    <property type="match status" value="1"/>
</dbReference>
<dbReference type="PROSITE" id="PS00670">
    <property type="entry name" value="D_2_HYDROXYACID_DH_2"/>
    <property type="match status" value="1"/>
</dbReference>
<dbReference type="PROSITE" id="PS00671">
    <property type="entry name" value="D_2_HYDROXYACID_DH_3"/>
    <property type="match status" value="1"/>
</dbReference>
<protein>
    <recommendedName>
        <fullName evidence="5">D-lactate/D-glycerate dehydrogenase</fullName>
        <shortName evidence="5">D-LDH/GDH</shortName>
        <ecNumber evidence="3">1.1.1.28</ecNumber>
        <ecNumber evidence="3">1.1.1.29</ecNumber>
    </recommendedName>
    <alternativeName>
        <fullName evidence="5">D-specific 2-hydroxyacid dehydrogenase</fullName>
    </alternativeName>
</protein>
<keyword id="KW-0520">NAD</keyword>
<keyword id="KW-0560">Oxidoreductase</keyword>
<organism>
    <name type="scientific">Pediococcus acidilactici</name>
    <dbReference type="NCBI Taxonomy" id="1254"/>
    <lineage>
        <taxon>Bacteria</taxon>
        <taxon>Bacillati</taxon>
        <taxon>Bacillota</taxon>
        <taxon>Bacilli</taxon>
        <taxon>Lactobacillales</taxon>
        <taxon>Lactobacillaceae</taxon>
        <taxon>Pediococcus</taxon>
        <taxon>Pediococcus acidilactici group</taxon>
    </lineage>
</organism>
<name>LDHD_PEDAC</name>
<evidence type="ECO:0000250" key="1">
    <source>
        <dbReference type="UniProtKB" id="P26297"/>
    </source>
</evidence>
<evidence type="ECO:0000250" key="2">
    <source>
        <dbReference type="UniProtKB" id="P30901"/>
    </source>
</evidence>
<evidence type="ECO:0000269" key="3">
    <source>
    </source>
</evidence>
<evidence type="ECO:0000303" key="4">
    <source>
    </source>
</evidence>
<evidence type="ECO:0000305" key="5"/>
<accession>Q59642</accession>